<reference key="1">
    <citation type="journal article" date="2006" name="Insect Biochem. Mol. Biol.">
        <title>An annotated catalog of salivary gland transcripts from Ixodes scapularis ticks.</title>
        <authorList>
            <person name="Ribeiro J.M.C."/>
            <person name="Alarcon-Chaidez F."/>
            <person name="Francischetti I.M.B."/>
            <person name="Mans B.J."/>
            <person name="Mather T.N."/>
            <person name="Valenzuela J.G."/>
            <person name="Wikel S.K."/>
        </authorList>
    </citation>
    <scope>NUCLEOTIDE SEQUENCE [LARGE SCALE MRNA]</scope>
    <source>
        <tissue>Salivary gland</tissue>
    </source>
</reference>
<proteinExistence type="evidence at transcript level"/>
<keyword id="KW-0472">Membrane</keyword>
<keyword id="KW-1185">Reference proteome</keyword>
<keyword id="KW-0812">Transmembrane</keyword>
<keyword id="KW-1133">Transmembrane helix</keyword>
<dbReference type="EMBL" id="AY775809">
    <property type="protein sequence ID" value="AAV80776.1"/>
    <property type="molecule type" value="mRNA"/>
</dbReference>
<dbReference type="FunCoup" id="Q5Q995">
    <property type="interactions" value="461"/>
</dbReference>
<dbReference type="VEuPathDB" id="VectorBase:ISCI008252"/>
<dbReference type="VEuPathDB" id="VectorBase:ISCP_020403"/>
<dbReference type="VEuPathDB" id="VectorBase:ISCW008252"/>
<dbReference type="HOGENOM" id="CLU_109648_2_0_1"/>
<dbReference type="InParanoid" id="Q5Q995"/>
<dbReference type="OrthoDB" id="1111004at2759"/>
<dbReference type="Proteomes" id="UP000001555">
    <property type="component" value="Unplaced"/>
</dbReference>
<dbReference type="GO" id="GO:0005615">
    <property type="term" value="C:extracellular space"/>
    <property type="evidence" value="ECO:0000314"/>
    <property type="project" value="UniProtKB"/>
</dbReference>
<dbReference type="GO" id="GO:0016020">
    <property type="term" value="C:membrane"/>
    <property type="evidence" value="ECO:0007669"/>
    <property type="project" value="UniProtKB-SubCell"/>
</dbReference>
<dbReference type="GO" id="GO:0006487">
    <property type="term" value="P:protein N-linked glycosylation"/>
    <property type="evidence" value="ECO:0000318"/>
    <property type="project" value="GO_Central"/>
</dbReference>
<dbReference type="InterPro" id="IPR018614">
    <property type="entry name" value="KRTCAP2"/>
</dbReference>
<dbReference type="PANTHER" id="PTHR32001">
    <property type="entry name" value="KERATINOCYTE-ASSOCIATED PROTEIN 2"/>
    <property type="match status" value="1"/>
</dbReference>
<dbReference type="PANTHER" id="PTHR32001:SF1">
    <property type="entry name" value="KERATINOCYTE-ASSOCIATED PROTEIN 2"/>
    <property type="match status" value="1"/>
</dbReference>
<dbReference type="Pfam" id="PF09775">
    <property type="entry name" value="Keratin_assoc"/>
    <property type="match status" value="1"/>
</dbReference>
<feature type="chain" id="PRO_0000327904" description="Protein KRTCAP2 homolog">
    <location>
        <begin position="1"/>
        <end position="135"/>
    </location>
</feature>
<feature type="transmembrane region" description="Helical" evidence="3">
    <location>
        <begin position="1"/>
        <end position="21"/>
    </location>
</feature>
<feature type="transmembrane region" description="Helical" evidence="3">
    <location>
        <begin position="35"/>
        <end position="55"/>
    </location>
</feature>
<feature type="transmembrane region" description="Helical" evidence="3">
    <location>
        <begin position="69"/>
        <end position="89"/>
    </location>
</feature>
<feature type="transmembrane region" description="Helical" evidence="3">
    <location>
        <begin position="93"/>
        <end position="113"/>
    </location>
</feature>
<accession>Q5Q995</accession>
<comment type="function">
    <text evidence="2">Subunit of the oligosaccharyl transferase (OST) complex that catalyzes the initial transfer of a defined glycan (Glc(3)Man(9)GlcNAc(2) in eukaryotes) from the lipid carrier dolichol-pyrophosphate to an asparagine residue within an Asn-X-Ser/Thr consensus motif in nascent polypeptide chains, the first step in protein N-glycosylation. N-glycosylation occurs cotranslationally and the complex associates with the Sec61 complex at the channel-forming translocon complex that mediates protein translocation across the endoplasmic reticulum (ER). All subunits are required for a maximal enzyme activity.</text>
</comment>
<comment type="subunit">
    <text evidence="1">Component of the oligosaccharyltransferase (OST) complex.</text>
</comment>
<comment type="subcellular location">
    <subcellularLocation>
        <location evidence="4">Membrane</location>
        <topology evidence="4">Multi-pass membrane protein</topology>
    </subcellularLocation>
</comment>
<comment type="similarity">
    <text evidence="4">Belongs to the KRTCAP2 family.</text>
</comment>
<organism>
    <name type="scientific">Ixodes scapularis</name>
    <name type="common">Black-legged tick</name>
    <name type="synonym">Deer tick</name>
    <dbReference type="NCBI Taxonomy" id="6945"/>
    <lineage>
        <taxon>Eukaryota</taxon>
        <taxon>Metazoa</taxon>
        <taxon>Ecdysozoa</taxon>
        <taxon>Arthropoda</taxon>
        <taxon>Chelicerata</taxon>
        <taxon>Arachnida</taxon>
        <taxon>Acari</taxon>
        <taxon>Parasitiformes</taxon>
        <taxon>Ixodida</taxon>
        <taxon>Ixodoidea</taxon>
        <taxon>Ixodidae</taxon>
        <taxon>Ixodinae</taxon>
        <taxon>Ixodes</taxon>
    </lineage>
</organism>
<name>KTAP2_IXOSC</name>
<protein>
    <recommendedName>
        <fullName>Protein KRTCAP2 homolog</fullName>
    </recommendedName>
    <alternativeName>
        <fullName>Dolichyl-diphosphooligosaccharide--protein glycosyltransferase subunit KCP2</fullName>
        <shortName>Oligosaccharyl transferase subunit KCP2</shortName>
    </alternativeName>
</protein>
<sequence length="135" mass="14326">MAVSSGTSGMLATCLFMLLFATMQIYKSQLTSSQPMAIVGGFLGSVLFILILTAISNFETHFFGRNFQTKLIPEVVIALVIAMAASGMVHRVCITTCLIFSIVALYYVSRISIKVHGSGAGTATAIPVTKGKKGK</sequence>
<evidence type="ECO:0000250" key="1">
    <source>
        <dbReference type="UniProtKB" id="P86229"/>
    </source>
</evidence>
<evidence type="ECO:0000250" key="2">
    <source>
        <dbReference type="UniProtKB" id="Q8N6L1"/>
    </source>
</evidence>
<evidence type="ECO:0000255" key="3"/>
<evidence type="ECO:0000305" key="4"/>